<comment type="function">
    <text evidence="1 2">Immunity component of one of 6 LXG toxin-immunity modules in this strain. They promote kin selection, mediate competition in biofilms, and drive spatial segregation of different strains, indicating that LXG toxins may help avoid warfare between strains in biofilms. Mediates intercellular competition during biofilm formation; disruption of the operon disadvantages the bacteria, but overexpression of the cognate immunity protein restores growth in competition with wild-type. In situ neutralizes the toxic effect of cognate toxin YqcG (PubMed:34280190). Neutralizes the toxic activity of cognate toxin YqcG upon expression in E.coli. Does not have immunity protein activity on other LXG toxins (PubMed:22200572).</text>
</comment>
<comment type="subunit">
    <text evidence="3">Probably interacts with cognate toxin YqcG but not with other non-cognate toxins. The interaction inhibits the toxic activity of YqcG (Probable).</text>
</comment>
<comment type="subcellular location">
    <subcellularLocation>
        <location evidence="3">Cytoplasm</location>
    </subcellularLocation>
</comment>
<comment type="induction">
    <text evidence="2">Expressed on rich and minimal solid media likely in early stationary phase; dependent on DegSU. Not expressed in liquid LB, but only under conditions that promote biofilm formation.</text>
</comment>
<comment type="disruption phenotype">
    <text evidence="2">Deletion of the yqcF-yqcG operon has no visible growth phenotype, however it is out-competed by wild-type cells.</text>
</comment>
<name>YQCF_BACSU</name>
<gene>
    <name type="primary">yqcF</name>
    <name type="ordered locus">BSU25870</name>
</gene>
<organism>
    <name type="scientific">Bacillus subtilis (strain 168)</name>
    <dbReference type="NCBI Taxonomy" id="224308"/>
    <lineage>
        <taxon>Bacteria</taxon>
        <taxon>Bacillati</taxon>
        <taxon>Bacillota</taxon>
        <taxon>Bacilli</taxon>
        <taxon>Bacillales</taxon>
        <taxon>Bacillaceae</taxon>
        <taxon>Bacillus</taxon>
    </lineage>
</organism>
<sequence length="192" mass="21476">MGVTQENKVIARTVLGAFGGKPKVTKYWDDNKNSSIDILSVSDQPQEGITSYSTLGLSDHSINYEVNGTPLRIEIVAAMESASDIYANVLSTCAFNIINSNFTCAPGVIFKNVISMYDQETDMKHIMFVPPFLWEEDLELLEFSNKNVTWLMALPISEGELQVAEKHGSDYLQDLLESKQIDIFDIKRESVV</sequence>
<evidence type="ECO:0000269" key="1">
    <source>
    </source>
</evidence>
<evidence type="ECO:0000269" key="2">
    <source>
    </source>
</evidence>
<evidence type="ECO:0000305" key="3"/>
<dbReference type="EMBL" id="D32216">
    <property type="protein sequence ID" value="BAA06963.1"/>
    <property type="molecule type" value="Genomic_DNA"/>
</dbReference>
<dbReference type="EMBL" id="D84432">
    <property type="protein sequence ID" value="BAA12427.1"/>
    <property type="molecule type" value="Genomic_DNA"/>
</dbReference>
<dbReference type="EMBL" id="AL009126">
    <property type="protein sequence ID" value="CAB14528.1"/>
    <property type="molecule type" value="Genomic_DNA"/>
</dbReference>
<dbReference type="PIR" id="E69949">
    <property type="entry name" value="E69949"/>
</dbReference>
<dbReference type="RefSeq" id="WP_009967790.1">
    <property type="nucleotide sequence ID" value="NZ_OZ025638.1"/>
</dbReference>
<dbReference type="SMR" id="P45941"/>
<dbReference type="FunCoup" id="P45941">
    <property type="interactions" value="9"/>
</dbReference>
<dbReference type="STRING" id="224308.BSU25870"/>
<dbReference type="PaxDb" id="224308-BSU25870"/>
<dbReference type="EnsemblBacteria" id="CAB14528">
    <property type="protein sequence ID" value="CAB14528"/>
    <property type="gene ID" value="BSU_25870"/>
</dbReference>
<dbReference type="GeneID" id="937785"/>
<dbReference type="KEGG" id="bsu:BSU25870"/>
<dbReference type="PATRIC" id="fig|224308.179.peg.2811"/>
<dbReference type="eggNOG" id="ENOG5032REF">
    <property type="taxonomic scope" value="Bacteria"/>
</dbReference>
<dbReference type="InParanoid" id="P45941"/>
<dbReference type="OrthoDB" id="8479146at2"/>
<dbReference type="BioCyc" id="BSUB:BSU25870-MONOMER"/>
<dbReference type="Proteomes" id="UP000001570">
    <property type="component" value="Chromosome"/>
</dbReference>
<dbReference type="GO" id="GO:0005737">
    <property type="term" value="C:cytoplasm"/>
    <property type="evidence" value="ECO:0007669"/>
    <property type="project" value="UniProtKB-SubCell"/>
</dbReference>
<dbReference type="InterPro" id="IPR020941">
    <property type="entry name" value="SUFU-like_domain"/>
</dbReference>
<dbReference type="Pfam" id="PF05076">
    <property type="entry name" value="SUFU"/>
    <property type="match status" value="1"/>
</dbReference>
<accession>P45941</accession>
<reference key="1">
    <citation type="journal article" date="1995" name="Microbiology">
        <title>Complete nucleotide sequence of a skin element excised by DNA rearrangement during sporulation in Bacillus subtilis.</title>
        <authorList>
            <person name="Takemaru K."/>
            <person name="Mizuno M."/>
            <person name="Sato T."/>
            <person name="Takeuchi M."/>
            <person name="Kobayashi Y."/>
        </authorList>
    </citation>
    <scope>NUCLEOTIDE SEQUENCE [GENOMIC DNA]</scope>
    <source>
        <strain>168 / JH642</strain>
    </source>
</reference>
<reference key="2">
    <citation type="journal article" date="1996" name="Microbiology">
        <title>Systematic sequencing of the 283 kb 210 degrees-232 degrees region of the Bacillus subtilis genome containing the skin element and many sporulation genes.</title>
        <authorList>
            <person name="Mizuno M."/>
            <person name="Masuda S."/>
            <person name="Takemaru K."/>
            <person name="Hosono S."/>
            <person name="Sato T."/>
            <person name="Takeuchi M."/>
            <person name="Kobayashi Y."/>
        </authorList>
    </citation>
    <scope>NUCLEOTIDE SEQUENCE [GENOMIC DNA]</scope>
    <source>
        <strain>168 / JH642</strain>
    </source>
</reference>
<reference key="3">
    <citation type="journal article" date="1997" name="Nature">
        <title>The complete genome sequence of the Gram-positive bacterium Bacillus subtilis.</title>
        <authorList>
            <person name="Kunst F."/>
            <person name="Ogasawara N."/>
            <person name="Moszer I."/>
            <person name="Albertini A.M."/>
            <person name="Alloni G."/>
            <person name="Azevedo V."/>
            <person name="Bertero M.G."/>
            <person name="Bessieres P."/>
            <person name="Bolotin A."/>
            <person name="Borchert S."/>
            <person name="Borriss R."/>
            <person name="Boursier L."/>
            <person name="Brans A."/>
            <person name="Braun M."/>
            <person name="Brignell S.C."/>
            <person name="Bron S."/>
            <person name="Brouillet S."/>
            <person name="Bruschi C.V."/>
            <person name="Caldwell B."/>
            <person name="Capuano V."/>
            <person name="Carter N.M."/>
            <person name="Choi S.-K."/>
            <person name="Codani J.-J."/>
            <person name="Connerton I.F."/>
            <person name="Cummings N.J."/>
            <person name="Daniel R.A."/>
            <person name="Denizot F."/>
            <person name="Devine K.M."/>
            <person name="Duesterhoeft A."/>
            <person name="Ehrlich S.D."/>
            <person name="Emmerson P.T."/>
            <person name="Entian K.-D."/>
            <person name="Errington J."/>
            <person name="Fabret C."/>
            <person name="Ferrari E."/>
            <person name="Foulger D."/>
            <person name="Fritz C."/>
            <person name="Fujita M."/>
            <person name="Fujita Y."/>
            <person name="Fuma S."/>
            <person name="Galizzi A."/>
            <person name="Galleron N."/>
            <person name="Ghim S.-Y."/>
            <person name="Glaser P."/>
            <person name="Goffeau A."/>
            <person name="Golightly E.J."/>
            <person name="Grandi G."/>
            <person name="Guiseppi G."/>
            <person name="Guy B.J."/>
            <person name="Haga K."/>
            <person name="Haiech J."/>
            <person name="Harwood C.R."/>
            <person name="Henaut A."/>
            <person name="Hilbert H."/>
            <person name="Holsappel S."/>
            <person name="Hosono S."/>
            <person name="Hullo M.-F."/>
            <person name="Itaya M."/>
            <person name="Jones L.-M."/>
            <person name="Joris B."/>
            <person name="Karamata D."/>
            <person name="Kasahara Y."/>
            <person name="Klaerr-Blanchard M."/>
            <person name="Klein C."/>
            <person name="Kobayashi Y."/>
            <person name="Koetter P."/>
            <person name="Koningstein G."/>
            <person name="Krogh S."/>
            <person name="Kumano M."/>
            <person name="Kurita K."/>
            <person name="Lapidus A."/>
            <person name="Lardinois S."/>
            <person name="Lauber J."/>
            <person name="Lazarevic V."/>
            <person name="Lee S.-M."/>
            <person name="Levine A."/>
            <person name="Liu H."/>
            <person name="Masuda S."/>
            <person name="Mauel C."/>
            <person name="Medigue C."/>
            <person name="Medina N."/>
            <person name="Mellado R.P."/>
            <person name="Mizuno M."/>
            <person name="Moestl D."/>
            <person name="Nakai S."/>
            <person name="Noback M."/>
            <person name="Noone D."/>
            <person name="O'Reilly M."/>
            <person name="Ogawa K."/>
            <person name="Ogiwara A."/>
            <person name="Oudega B."/>
            <person name="Park S.-H."/>
            <person name="Parro V."/>
            <person name="Pohl T.M."/>
            <person name="Portetelle D."/>
            <person name="Porwollik S."/>
            <person name="Prescott A.M."/>
            <person name="Presecan E."/>
            <person name="Pujic P."/>
            <person name="Purnelle B."/>
            <person name="Rapoport G."/>
            <person name="Rey M."/>
            <person name="Reynolds S."/>
            <person name="Rieger M."/>
            <person name="Rivolta C."/>
            <person name="Rocha E."/>
            <person name="Roche B."/>
            <person name="Rose M."/>
            <person name="Sadaie Y."/>
            <person name="Sato T."/>
            <person name="Scanlan E."/>
            <person name="Schleich S."/>
            <person name="Schroeter R."/>
            <person name="Scoffone F."/>
            <person name="Sekiguchi J."/>
            <person name="Sekowska A."/>
            <person name="Seror S.J."/>
            <person name="Serror P."/>
            <person name="Shin B.-S."/>
            <person name="Soldo B."/>
            <person name="Sorokin A."/>
            <person name="Tacconi E."/>
            <person name="Takagi T."/>
            <person name="Takahashi H."/>
            <person name="Takemaru K."/>
            <person name="Takeuchi M."/>
            <person name="Tamakoshi A."/>
            <person name="Tanaka T."/>
            <person name="Terpstra P."/>
            <person name="Tognoni A."/>
            <person name="Tosato V."/>
            <person name="Uchiyama S."/>
            <person name="Vandenbol M."/>
            <person name="Vannier F."/>
            <person name="Vassarotti A."/>
            <person name="Viari A."/>
            <person name="Wambutt R."/>
            <person name="Wedler E."/>
            <person name="Wedler H."/>
            <person name="Weitzenegger T."/>
            <person name="Winters P."/>
            <person name="Wipat A."/>
            <person name="Yamamoto H."/>
            <person name="Yamane K."/>
            <person name="Yasumoto K."/>
            <person name="Yata K."/>
            <person name="Yoshida K."/>
            <person name="Yoshikawa H.-F."/>
            <person name="Zumstein E."/>
            <person name="Yoshikawa H."/>
            <person name="Danchin A."/>
        </authorList>
    </citation>
    <scope>NUCLEOTIDE SEQUENCE [LARGE SCALE GENOMIC DNA]</scope>
    <source>
        <strain>168</strain>
    </source>
</reference>
<reference key="4">
    <citation type="journal article" date="1995" name="Gene">
        <title>Analysis of a Bacillus subtilis genome fragment using a co-operative computer system prototype.</title>
        <authorList>
            <person name="Medigue C."/>
            <person name="Moszer I."/>
            <person name="Viari A."/>
            <person name="Danchin A."/>
        </authorList>
    </citation>
    <scope>IDENTIFICATION</scope>
</reference>
<reference key="5">
    <citation type="journal article" date="2012" name="FEBS Lett.">
        <title>A novel family of toxin/antitoxin proteins in Bacillus species.</title>
        <authorList>
            <person name="Holberger L.E."/>
            <person name="Garza-Sanchez F."/>
            <person name="Lamoureux J."/>
            <person name="Low D.A."/>
            <person name="Hayes C.S."/>
        </authorList>
    </citation>
    <scope>FUNCTION AS AN IMMUNITY PROTEIN</scope>
    <scope>EXPRESSION IN E.COLI</scope>
    <source>
        <strain>168</strain>
    </source>
</reference>
<reference key="6">
    <citation type="journal article" date="2021" name="PLoS Genet.">
        <title>Diverse LXG toxin and antitoxin systems specifically mediate intraspecies competition in Bacillus subtilis biofilms.</title>
        <authorList>
            <person name="Kobayashi K."/>
        </authorList>
    </citation>
    <scope>FUNCTION AS AN IMMUNITY PROTEIN</scope>
    <scope>INDUCTION</scope>
    <scope>DISRUPTION PHENOTYPE</scope>
    <source>
        <strain>168 / Marburg / ATCC 6051 / DSM 10 / JCM 1465 / NBRC 13719 / NCIMB 3610 / NRRL NRS-744 / VKM B-501</strain>
    </source>
</reference>
<protein>
    <recommendedName>
        <fullName>Immunity protein YqcF</fullName>
    </recommendedName>
</protein>
<feature type="chain" id="PRO_0000049776" description="Immunity protein YqcF">
    <location>
        <begin position="1"/>
        <end position="192"/>
    </location>
</feature>
<proteinExistence type="evidence at protein level"/>
<keyword id="KW-0963">Cytoplasm</keyword>
<keyword id="KW-1185">Reference proteome</keyword>